<dbReference type="EMBL" id="CP000319">
    <property type="protein sequence ID" value="ABE61021.1"/>
    <property type="molecule type" value="Genomic_DNA"/>
</dbReference>
<dbReference type="RefSeq" id="WP_011508728.1">
    <property type="nucleotide sequence ID" value="NC_007964.1"/>
</dbReference>
<dbReference type="SMR" id="Q1QRX6"/>
<dbReference type="STRING" id="323097.Nham_0120"/>
<dbReference type="KEGG" id="nha:Nham_0120"/>
<dbReference type="eggNOG" id="COG1220">
    <property type="taxonomic scope" value="Bacteria"/>
</dbReference>
<dbReference type="HOGENOM" id="CLU_033123_0_0_5"/>
<dbReference type="OrthoDB" id="9804062at2"/>
<dbReference type="Proteomes" id="UP000001953">
    <property type="component" value="Chromosome"/>
</dbReference>
<dbReference type="GO" id="GO:0009376">
    <property type="term" value="C:HslUV protease complex"/>
    <property type="evidence" value="ECO:0007669"/>
    <property type="project" value="UniProtKB-UniRule"/>
</dbReference>
<dbReference type="GO" id="GO:0005524">
    <property type="term" value="F:ATP binding"/>
    <property type="evidence" value="ECO:0007669"/>
    <property type="project" value="UniProtKB-UniRule"/>
</dbReference>
<dbReference type="GO" id="GO:0016887">
    <property type="term" value="F:ATP hydrolysis activity"/>
    <property type="evidence" value="ECO:0007669"/>
    <property type="project" value="InterPro"/>
</dbReference>
<dbReference type="GO" id="GO:0008233">
    <property type="term" value="F:peptidase activity"/>
    <property type="evidence" value="ECO:0007669"/>
    <property type="project" value="InterPro"/>
</dbReference>
<dbReference type="GO" id="GO:0036402">
    <property type="term" value="F:proteasome-activating activity"/>
    <property type="evidence" value="ECO:0007669"/>
    <property type="project" value="UniProtKB-UniRule"/>
</dbReference>
<dbReference type="GO" id="GO:0043335">
    <property type="term" value="P:protein unfolding"/>
    <property type="evidence" value="ECO:0007669"/>
    <property type="project" value="UniProtKB-UniRule"/>
</dbReference>
<dbReference type="GO" id="GO:0051603">
    <property type="term" value="P:proteolysis involved in protein catabolic process"/>
    <property type="evidence" value="ECO:0007669"/>
    <property type="project" value="TreeGrafter"/>
</dbReference>
<dbReference type="CDD" id="cd19498">
    <property type="entry name" value="RecA-like_HslU"/>
    <property type="match status" value="1"/>
</dbReference>
<dbReference type="FunFam" id="3.40.50.300:FF:000213">
    <property type="entry name" value="ATP-dependent protease ATPase subunit HslU"/>
    <property type="match status" value="1"/>
</dbReference>
<dbReference type="FunFam" id="3.40.50.300:FF:000220">
    <property type="entry name" value="ATP-dependent protease ATPase subunit HslU"/>
    <property type="match status" value="1"/>
</dbReference>
<dbReference type="Gene3D" id="1.10.8.60">
    <property type="match status" value="1"/>
</dbReference>
<dbReference type="Gene3D" id="1.10.8.10">
    <property type="entry name" value="DNA helicase RuvA subunit, C-terminal domain"/>
    <property type="match status" value="1"/>
</dbReference>
<dbReference type="Gene3D" id="3.40.50.300">
    <property type="entry name" value="P-loop containing nucleotide triphosphate hydrolases"/>
    <property type="match status" value="1"/>
</dbReference>
<dbReference type="HAMAP" id="MF_00249">
    <property type="entry name" value="HslU"/>
    <property type="match status" value="1"/>
</dbReference>
<dbReference type="InterPro" id="IPR003593">
    <property type="entry name" value="AAA+_ATPase"/>
</dbReference>
<dbReference type="InterPro" id="IPR050052">
    <property type="entry name" value="ATP-dep_Clp_protease_ClpX"/>
</dbReference>
<dbReference type="InterPro" id="IPR003959">
    <property type="entry name" value="ATPase_AAA_core"/>
</dbReference>
<dbReference type="InterPro" id="IPR019489">
    <property type="entry name" value="Clp_ATPase_C"/>
</dbReference>
<dbReference type="InterPro" id="IPR004491">
    <property type="entry name" value="HslU"/>
</dbReference>
<dbReference type="InterPro" id="IPR027417">
    <property type="entry name" value="P-loop_NTPase"/>
</dbReference>
<dbReference type="NCBIfam" id="TIGR00390">
    <property type="entry name" value="hslU"/>
    <property type="match status" value="1"/>
</dbReference>
<dbReference type="NCBIfam" id="NF003544">
    <property type="entry name" value="PRK05201.1"/>
    <property type="match status" value="1"/>
</dbReference>
<dbReference type="PANTHER" id="PTHR48102">
    <property type="entry name" value="ATP-DEPENDENT CLP PROTEASE ATP-BINDING SUBUNIT CLPX-LIKE, MITOCHONDRIAL-RELATED"/>
    <property type="match status" value="1"/>
</dbReference>
<dbReference type="PANTHER" id="PTHR48102:SF3">
    <property type="entry name" value="ATP-DEPENDENT PROTEASE ATPASE SUBUNIT HSLU"/>
    <property type="match status" value="1"/>
</dbReference>
<dbReference type="Pfam" id="PF00004">
    <property type="entry name" value="AAA"/>
    <property type="match status" value="1"/>
</dbReference>
<dbReference type="Pfam" id="PF07724">
    <property type="entry name" value="AAA_2"/>
    <property type="match status" value="1"/>
</dbReference>
<dbReference type="SMART" id="SM00382">
    <property type="entry name" value="AAA"/>
    <property type="match status" value="1"/>
</dbReference>
<dbReference type="SMART" id="SM01086">
    <property type="entry name" value="ClpB_D2-small"/>
    <property type="match status" value="1"/>
</dbReference>
<dbReference type="SUPFAM" id="SSF52540">
    <property type="entry name" value="P-loop containing nucleoside triphosphate hydrolases"/>
    <property type="match status" value="1"/>
</dbReference>
<reference key="1">
    <citation type="submission" date="2006-03" db="EMBL/GenBank/DDBJ databases">
        <title>Complete sequence of chromosome of Nitrobacter hamburgensis X14.</title>
        <authorList>
            <consortium name="US DOE Joint Genome Institute"/>
            <person name="Copeland A."/>
            <person name="Lucas S."/>
            <person name="Lapidus A."/>
            <person name="Barry K."/>
            <person name="Detter J.C."/>
            <person name="Glavina del Rio T."/>
            <person name="Hammon N."/>
            <person name="Israni S."/>
            <person name="Dalin E."/>
            <person name="Tice H."/>
            <person name="Pitluck S."/>
            <person name="Chain P."/>
            <person name="Malfatti S."/>
            <person name="Shin M."/>
            <person name="Vergez L."/>
            <person name="Schmutz J."/>
            <person name="Larimer F."/>
            <person name="Land M."/>
            <person name="Hauser L."/>
            <person name="Kyrpides N."/>
            <person name="Ivanova N."/>
            <person name="Ward B."/>
            <person name="Arp D."/>
            <person name="Klotz M."/>
            <person name="Stein L."/>
            <person name="O'Mullan G."/>
            <person name="Starkenburg S."/>
            <person name="Sayavedra L."/>
            <person name="Poret-Peterson A.T."/>
            <person name="Gentry M.E."/>
            <person name="Bruce D."/>
            <person name="Richardson P."/>
        </authorList>
    </citation>
    <scope>NUCLEOTIDE SEQUENCE [LARGE SCALE GENOMIC DNA]</scope>
    <source>
        <strain>DSM 10229 / NCIMB 13809 / X14</strain>
    </source>
</reference>
<accession>Q1QRX6</accession>
<name>HSLU_NITHX</name>
<comment type="function">
    <text evidence="1">ATPase subunit of a proteasome-like degradation complex; this subunit has chaperone activity. The binding of ATP and its subsequent hydrolysis by HslU are essential for unfolding of protein substrates subsequently hydrolyzed by HslV. HslU recognizes the N-terminal part of its protein substrates and unfolds these before they are guided to HslV for hydrolysis.</text>
</comment>
<comment type="subunit">
    <text evidence="1">A double ring-shaped homohexamer of HslV is capped on each side by a ring-shaped HslU homohexamer. The assembly of the HslU/HslV complex is dependent on binding of ATP.</text>
</comment>
<comment type="subcellular location">
    <subcellularLocation>
        <location evidence="1">Cytoplasm</location>
    </subcellularLocation>
</comment>
<comment type="similarity">
    <text evidence="1">Belongs to the ClpX chaperone family. HslU subfamily.</text>
</comment>
<feature type="chain" id="PRO_1000012763" description="ATP-dependent protease ATPase subunit HslU">
    <location>
        <begin position="1"/>
        <end position="433"/>
    </location>
</feature>
<feature type="binding site" evidence="1">
    <location>
        <position position="18"/>
    </location>
    <ligand>
        <name>ATP</name>
        <dbReference type="ChEBI" id="CHEBI:30616"/>
    </ligand>
</feature>
<feature type="binding site" evidence="1">
    <location>
        <begin position="60"/>
        <end position="65"/>
    </location>
    <ligand>
        <name>ATP</name>
        <dbReference type="ChEBI" id="CHEBI:30616"/>
    </ligand>
</feature>
<feature type="binding site" evidence="1">
    <location>
        <position position="246"/>
    </location>
    <ligand>
        <name>ATP</name>
        <dbReference type="ChEBI" id="CHEBI:30616"/>
    </ligand>
</feature>
<feature type="binding site" evidence="1">
    <location>
        <position position="311"/>
    </location>
    <ligand>
        <name>ATP</name>
        <dbReference type="ChEBI" id="CHEBI:30616"/>
    </ligand>
</feature>
<feature type="binding site" evidence="1">
    <location>
        <position position="383"/>
    </location>
    <ligand>
        <name>ATP</name>
        <dbReference type="ChEBI" id="CHEBI:30616"/>
    </ligand>
</feature>
<gene>
    <name evidence="1" type="primary">hslU</name>
    <name type="ordered locus">Nham_0120</name>
</gene>
<protein>
    <recommendedName>
        <fullName evidence="1">ATP-dependent protease ATPase subunit HslU</fullName>
    </recommendedName>
    <alternativeName>
        <fullName evidence="1">Unfoldase HslU</fullName>
    </alternativeName>
</protein>
<keyword id="KW-0067">ATP-binding</keyword>
<keyword id="KW-0143">Chaperone</keyword>
<keyword id="KW-0963">Cytoplasm</keyword>
<keyword id="KW-0547">Nucleotide-binding</keyword>
<keyword id="KW-1185">Reference proteome</keyword>
<keyword id="KW-0346">Stress response</keyword>
<proteinExistence type="inferred from homology"/>
<organism>
    <name type="scientific">Nitrobacter hamburgensis (strain DSM 10229 / NCIMB 13809 / X14)</name>
    <dbReference type="NCBI Taxonomy" id="323097"/>
    <lineage>
        <taxon>Bacteria</taxon>
        <taxon>Pseudomonadati</taxon>
        <taxon>Pseudomonadota</taxon>
        <taxon>Alphaproteobacteria</taxon>
        <taxon>Hyphomicrobiales</taxon>
        <taxon>Nitrobacteraceae</taxon>
        <taxon>Nitrobacter</taxon>
    </lineage>
</organism>
<evidence type="ECO:0000255" key="1">
    <source>
        <dbReference type="HAMAP-Rule" id="MF_00249"/>
    </source>
</evidence>
<sequence length="433" mass="47571">MTHFSPREIVSELDRFIVGQTDAKRAVSIALRNRWRRQQLTGSMREEVLPKNILMIGPTGVGKTEIARRLAKLANAPFIKVEATKFTEVGYVGRDVEQIVRDLVEVAIGQTRERKRKDVQARAQLAAEERVLDALVGANASAATRDSFRRKLRAGDLNDKEIEIETQSSGGAPMFEIPGMPGAQVGAISIGDIFGKMGGRTKTRRLTVVDSYEILVNEESDKLLDSDQLTQEAIAAVENNGIVFLDEIDKICVRDGRSGGDVSREGVQRDLLPLIEGTTVSTKHGAVKTDHILFIASGAFHIAKPSDLLPELQGRLPIRVELDALTRNDMRRILTEPEASLIKQYVALMQTEGVTLDITDDAIDALADIAVAVNSTVENIGARRLQTVMERVLDDISFSAPDRNGETVRIDAGYVQKHIGDLAKNADLSRFIL</sequence>